<gene>
    <name evidence="1" type="primary">ruvB</name>
    <name type="ordered locus">BURPS668_3366</name>
</gene>
<name>RUVB_BURP6</name>
<keyword id="KW-0067">ATP-binding</keyword>
<keyword id="KW-0963">Cytoplasm</keyword>
<keyword id="KW-0227">DNA damage</keyword>
<keyword id="KW-0233">DNA recombination</keyword>
<keyword id="KW-0234">DNA repair</keyword>
<keyword id="KW-0238">DNA-binding</keyword>
<keyword id="KW-0378">Hydrolase</keyword>
<keyword id="KW-0547">Nucleotide-binding</keyword>
<proteinExistence type="inferred from homology"/>
<comment type="function">
    <text evidence="1">The RuvA-RuvB-RuvC complex processes Holliday junction (HJ) DNA during genetic recombination and DNA repair, while the RuvA-RuvB complex plays an important role in the rescue of blocked DNA replication forks via replication fork reversal (RFR). RuvA specifically binds to HJ cruciform DNA, conferring on it an open structure. The RuvB hexamer acts as an ATP-dependent pump, pulling dsDNA into and through the RuvAB complex. RuvB forms 2 homohexamers on either side of HJ DNA bound by 1 or 2 RuvA tetramers; 4 subunits per hexamer contact DNA at a time. Coordinated motions by a converter formed by DNA-disengaged RuvB subunits stimulates ATP hydrolysis and nucleotide exchange. Immobilization of the converter enables RuvB to convert the ATP-contained energy into a lever motion, pulling 2 nucleotides of DNA out of the RuvA tetramer per ATP hydrolyzed, thus driving DNA branch migration. The RuvB motors rotate together with the DNA substrate, which together with the progressing nucleotide cycle form the mechanistic basis for DNA recombination by continuous HJ branch migration. Branch migration allows RuvC to scan DNA until it finds its consensus sequence, where it cleaves and resolves cruciform DNA.</text>
</comment>
<comment type="catalytic activity">
    <reaction evidence="1">
        <text>ATP + H2O = ADP + phosphate + H(+)</text>
        <dbReference type="Rhea" id="RHEA:13065"/>
        <dbReference type="ChEBI" id="CHEBI:15377"/>
        <dbReference type="ChEBI" id="CHEBI:15378"/>
        <dbReference type="ChEBI" id="CHEBI:30616"/>
        <dbReference type="ChEBI" id="CHEBI:43474"/>
        <dbReference type="ChEBI" id="CHEBI:456216"/>
    </reaction>
</comment>
<comment type="subunit">
    <text evidence="1">Homohexamer. Forms an RuvA(8)-RuvB(12)-Holliday junction (HJ) complex. HJ DNA is sandwiched between 2 RuvA tetramers; dsDNA enters through RuvA and exits via RuvB. An RuvB hexamer assembles on each DNA strand where it exits the tetramer. Each RuvB hexamer is contacted by two RuvA subunits (via domain III) on 2 adjacent RuvB subunits; this complex drives branch migration. In the full resolvosome a probable DNA-RuvA(4)-RuvB(12)-RuvC(2) complex forms which resolves the HJ.</text>
</comment>
<comment type="subcellular location">
    <subcellularLocation>
        <location evidence="1">Cytoplasm</location>
    </subcellularLocation>
</comment>
<comment type="domain">
    <text evidence="1">Has 3 domains, the large (RuvB-L) and small ATPase (RuvB-S) domains and the C-terminal head (RuvB-H) domain. The head domain binds DNA, while the ATPase domains jointly bind ATP, ADP or are empty depending on the state of the subunit in the translocation cycle. During a single DNA translocation step the structure of each domain remains the same, but their relative positions change.</text>
</comment>
<comment type="similarity">
    <text evidence="1">Belongs to the RuvB family.</text>
</comment>
<reference key="1">
    <citation type="journal article" date="2010" name="Genome Biol. Evol.">
        <title>Continuing evolution of Burkholderia mallei through genome reduction and large-scale rearrangements.</title>
        <authorList>
            <person name="Losada L."/>
            <person name="Ronning C.M."/>
            <person name="DeShazer D."/>
            <person name="Woods D."/>
            <person name="Fedorova N."/>
            <person name="Kim H.S."/>
            <person name="Shabalina S.A."/>
            <person name="Pearson T.R."/>
            <person name="Brinkac L."/>
            <person name="Tan P."/>
            <person name="Nandi T."/>
            <person name="Crabtree J."/>
            <person name="Badger J."/>
            <person name="Beckstrom-Sternberg S."/>
            <person name="Saqib M."/>
            <person name="Schutzer S.E."/>
            <person name="Keim P."/>
            <person name="Nierman W.C."/>
        </authorList>
    </citation>
    <scope>NUCLEOTIDE SEQUENCE [LARGE SCALE GENOMIC DNA]</scope>
    <source>
        <strain>668</strain>
    </source>
</reference>
<sequence>MIETDKLAAERIIAATPASSHEEAFERALRPRQLDEYVGQEKVRDQLEIFIEAAKRRSEALDHVLLFGPPGLGKTTLAHIIAREMGVNLRQTSGPVLERAGDLAALLTNLEANDVLFIDEIHRLSPVVEEILYPALEDYQIDIMIGEGPAARSVKLDLQPFTLVGATTRAGMLTNPLRDRFGIVARLEFYDAEQLSRIVRRSAALLNAQIDPAGALEIAKRSRGTPRIANRLLRRVRDYAEVKADGNITAAVADAALAMLDVDPVGFDLMDRKLLEAILHKFDGGPVGVDNLAAAIGEERDTIEDVLEPYLIQQGFLQRTPRGRVATLLTYRHFGLSAPDAANPVRNLWDTPDAEC</sequence>
<dbReference type="EC" id="3.6.4.-" evidence="1"/>
<dbReference type="EMBL" id="CP000570">
    <property type="protein sequence ID" value="ABN84518.1"/>
    <property type="molecule type" value="Genomic_DNA"/>
</dbReference>
<dbReference type="RefSeq" id="WP_004194268.1">
    <property type="nucleotide sequence ID" value="NC_009074.1"/>
</dbReference>
<dbReference type="SMR" id="A3NDF6"/>
<dbReference type="GeneID" id="93061494"/>
<dbReference type="KEGG" id="bpd:BURPS668_3366"/>
<dbReference type="HOGENOM" id="CLU_055599_1_0_4"/>
<dbReference type="GO" id="GO:0005737">
    <property type="term" value="C:cytoplasm"/>
    <property type="evidence" value="ECO:0007669"/>
    <property type="project" value="UniProtKB-SubCell"/>
</dbReference>
<dbReference type="GO" id="GO:0048476">
    <property type="term" value="C:Holliday junction resolvase complex"/>
    <property type="evidence" value="ECO:0007669"/>
    <property type="project" value="UniProtKB-UniRule"/>
</dbReference>
<dbReference type="GO" id="GO:0005524">
    <property type="term" value="F:ATP binding"/>
    <property type="evidence" value="ECO:0007669"/>
    <property type="project" value="UniProtKB-UniRule"/>
</dbReference>
<dbReference type="GO" id="GO:0016887">
    <property type="term" value="F:ATP hydrolysis activity"/>
    <property type="evidence" value="ECO:0007669"/>
    <property type="project" value="InterPro"/>
</dbReference>
<dbReference type="GO" id="GO:0000400">
    <property type="term" value="F:four-way junction DNA binding"/>
    <property type="evidence" value="ECO:0007669"/>
    <property type="project" value="UniProtKB-UniRule"/>
</dbReference>
<dbReference type="GO" id="GO:0009378">
    <property type="term" value="F:four-way junction helicase activity"/>
    <property type="evidence" value="ECO:0007669"/>
    <property type="project" value="InterPro"/>
</dbReference>
<dbReference type="GO" id="GO:0006310">
    <property type="term" value="P:DNA recombination"/>
    <property type="evidence" value="ECO:0007669"/>
    <property type="project" value="UniProtKB-UniRule"/>
</dbReference>
<dbReference type="GO" id="GO:0006281">
    <property type="term" value="P:DNA repair"/>
    <property type="evidence" value="ECO:0007669"/>
    <property type="project" value="UniProtKB-UniRule"/>
</dbReference>
<dbReference type="CDD" id="cd00009">
    <property type="entry name" value="AAA"/>
    <property type="match status" value="1"/>
</dbReference>
<dbReference type="FunFam" id="1.10.10.10:FF:000086">
    <property type="entry name" value="Holliday junction ATP-dependent DNA helicase RuvB"/>
    <property type="match status" value="1"/>
</dbReference>
<dbReference type="FunFam" id="3.40.50.300:FF:000073">
    <property type="entry name" value="Holliday junction ATP-dependent DNA helicase RuvB"/>
    <property type="match status" value="1"/>
</dbReference>
<dbReference type="Gene3D" id="1.10.8.60">
    <property type="match status" value="1"/>
</dbReference>
<dbReference type="Gene3D" id="3.40.50.300">
    <property type="entry name" value="P-loop containing nucleotide triphosphate hydrolases"/>
    <property type="match status" value="1"/>
</dbReference>
<dbReference type="Gene3D" id="1.10.10.10">
    <property type="entry name" value="Winged helix-like DNA-binding domain superfamily/Winged helix DNA-binding domain"/>
    <property type="match status" value="1"/>
</dbReference>
<dbReference type="HAMAP" id="MF_00016">
    <property type="entry name" value="DNA_HJ_migration_RuvB"/>
    <property type="match status" value="1"/>
</dbReference>
<dbReference type="InterPro" id="IPR003593">
    <property type="entry name" value="AAA+_ATPase"/>
</dbReference>
<dbReference type="InterPro" id="IPR041445">
    <property type="entry name" value="AAA_lid_4"/>
</dbReference>
<dbReference type="InterPro" id="IPR004605">
    <property type="entry name" value="DNA_helicase_Holl-junc_RuvB"/>
</dbReference>
<dbReference type="InterPro" id="IPR027417">
    <property type="entry name" value="P-loop_NTPase"/>
</dbReference>
<dbReference type="InterPro" id="IPR008824">
    <property type="entry name" value="RuvB-like_N"/>
</dbReference>
<dbReference type="InterPro" id="IPR008823">
    <property type="entry name" value="RuvB_C"/>
</dbReference>
<dbReference type="InterPro" id="IPR036388">
    <property type="entry name" value="WH-like_DNA-bd_sf"/>
</dbReference>
<dbReference type="InterPro" id="IPR036390">
    <property type="entry name" value="WH_DNA-bd_sf"/>
</dbReference>
<dbReference type="NCBIfam" id="NF000868">
    <property type="entry name" value="PRK00080.1"/>
    <property type="match status" value="1"/>
</dbReference>
<dbReference type="NCBIfam" id="TIGR00635">
    <property type="entry name" value="ruvB"/>
    <property type="match status" value="1"/>
</dbReference>
<dbReference type="PANTHER" id="PTHR42848">
    <property type="match status" value="1"/>
</dbReference>
<dbReference type="PANTHER" id="PTHR42848:SF1">
    <property type="entry name" value="HOLLIDAY JUNCTION BRANCH MIGRATION COMPLEX SUBUNIT RUVB"/>
    <property type="match status" value="1"/>
</dbReference>
<dbReference type="Pfam" id="PF17864">
    <property type="entry name" value="AAA_lid_4"/>
    <property type="match status" value="1"/>
</dbReference>
<dbReference type="Pfam" id="PF05491">
    <property type="entry name" value="RuvB_C"/>
    <property type="match status" value="1"/>
</dbReference>
<dbReference type="Pfam" id="PF05496">
    <property type="entry name" value="RuvB_N"/>
    <property type="match status" value="1"/>
</dbReference>
<dbReference type="SMART" id="SM00382">
    <property type="entry name" value="AAA"/>
    <property type="match status" value="1"/>
</dbReference>
<dbReference type="SUPFAM" id="SSF52540">
    <property type="entry name" value="P-loop containing nucleoside triphosphate hydrolases"/>
    <property type="match status" value="1"/>
</dbReference>
<dbReference type="SUPFAM" id="SSF46785">
    <property type="entry name" value="Winged helix' DNA-binding domain"/>
    <property type="match status" value="1"/>
</dbReference>
<protein>
    <recommendedName>
        <fullName evidence="1">Holliday junction branch migration complex subunit RuvB</fullName>
        <ecNumber evidence="1">3.6.4.-</ecNumber>
    </recommendedName>
</protein>
<accession>A3NDF6</accession>
<evidence type="ECO:0000255" key="1">
    <source>
        <dbReference type="HAMAP-Rule" id="MF_00016"/>
    </source>
</evidence>
<feature type="chain" id="PRO_1000001375" description="Holliday junction branch migration complex subunit RuvB">
    <location>
        <begin position="1"/>
        <end position="356"/>
    </location>
</feature>
<feature type="region of interest" description="Large ATPase domain (RuvB-L)" evidence="1">
    <location>
        <begin position="4"/>
        <end position="190"/>
    </location>
</feature>
<feature type="region of interest" description="Small ATPAse domain (RuvB-S)" evidence="1">
    <location>
        <begin position="191"/>
        <end position="261"/>
    </location>
</feature>
<feature type="region of interest" description="Head domain (RuvB-H)" evidence="1">
    <location>
        <begin position="264"/>
        <end position="356"/>
    </location>
</feature>
<feature type="binding site" evidence="1">
    <location>
        <position position="29"/>
    </location>
    <ligand>
        <name>ATP</name>
        <dbReference type="ChEBI" id="CHEBI:30616"/>
    </ligand>
</feature>
<feature type="binding site" evidence="1">
    <location>
        <position position="30"/>
    </location>
    <ligand>
        <name>ATP</name>
        <dbReference type="ChEBI" id="CHEBI:30616"/>
    </ligand>
</feature>
<feature type="binding site" evidence="1">
    <location>
        <position position="71"/>
    </location>
    <ligand>
        <name>ATP</name>
        <dbReference type="ChEBI" id="CHEBI:30616"/>
    </ligand>
</feature>
<feature type="binding site" evidence="1">
    <location>
        <position position="74"/>
    </location>
    <ligand>
        <name>ATP</name>
        <dbReference type="ChEBI" id="CHEBI:30616"/>
    </ligand>
</feature>
<feature type="binding site" evidence="1">
    <location>
        <position position="75"/>
    </location>
    <ligand>
        <name>ATP</name>
        <dbReference type="ChEBI" id="CHEBI:30616"/>
    </ligand>
</feature>
<feature type="binding site" evidence="1">
    <location>
        <position position="75"/>
    </location>
    <ligand>
        <name>Mg(2+)</name>
        <dbReference type="ChEBI" id="CHEBI:18420"/>
    </ligand>
</feature>
<feature type="binding site" evidence="1">
    <location>
        <position position="76"/>
    </location>
    <ligand>
        <name>ATP</name>
        <dbReference type="ChEBI" id="CHEBI:30616"/>
    </ligand>
</feature>
<feature type="binding site" evidence="1">
    <location>
        <begin position="137"/>
        <end position="139"/>
    </location>
    <ligand>
        <name>ATP</name>
        <dbReference type="ChEBI" id="CHEBI:30616"/>
    </ligand>
</feature>
<feature type="binding site" evidence="1">
    <location>
        <position position="180"/>
    </location>
    <ligand>
        <name>ATP</name>
        <dbReference type="ChEBI" id="CHEBI:30616"/>
    </ligand>
</feature>
<feature type="binding site" evidence="1">
    <location>
        <position position="190"/>
    </location>
    <ligand>
        <name>ATP</name>
        <dbReference type="ChEBI" id="CHEBI:30616"/>
    </ligand>
</feature>
<feature type="binding site" evidence="1">
    <location>
        <position position="227"/>
    </location>
    <ligand>
        <name>ATP</name>
        <dbReference type="ChEBI" id="CHEBI:30616"/>
    </ligand>
</feature>
<feature type="binding site" evidence="1">
    <location>
        <position position="300"/>
    </location>
    <ligand>
        <name>DNA</name>
        <dbReference type="ChEBI" id="CHEBI:16991"/>
    </ligand>
</feature>
<feature type="binding site" evidence="1">
    <location>
        <position position="319"/>
    </location>
    <ligand>
        <name>DNA</name>
        <dbReference type="ChEBI" id="CHEBI:16991"/>
    </ligand>
</feature>
<feature type="binding site" evidence="1">
    <location>
        <position position="324"/>
    </location>
    <ligand>
        <name>DNA</name>
        <dbReference type="ChEBI" id="CHEBI:16991"/>
    </ligand>
</feature>
<organism>
    <name type="scientific">Burkholderia pseudomallei (strain 668)</name>
    <dbReference type="NCBI Taxonomy" id="320373"/>
    <lineage>
        <taxon>Bacteria</taxon>
        <taxon>Pseudomonadati</taxon>
        <taxon>Pseudomonadota</taxon>
        <taxon>Betaproteobacteria</taxon>
        <taxon>Burkholderiales</taxon>
        <taxon>Burkholderiaceae</taxon>
        <taxon>Burkholderia</taxon>
        <taxon>pseudomallei group</taxon>
    </lineage>
</organism>